<dbReference type="EMBL" id="CP000552">
    <property type="protein sequence ID" value="ABM72836.1"/>
    <property type="molecule type" value="Genomic_DNA"/>
</dbReference>
<dbReference type="RefSeq" id="WP_011820931.1">
    <property type="nucleotide sequence ID" value="NC_008817.1"/>
</dbReference>
<dbReference type="SMR" id="A2BYH5"/>
<dbReference type="STRING" id="167542.P9515_16291"/>
<dbReference type="GeneID" id="60201984"/>
<dbReference type="KEGG" id="pmc:P9515_16291"/>
<dbReference type="eggNOG" id="COG0224">
    <property type="taxonomic scope" value="Bacteria"/>
</dbReference>
<dbReference type="HOGENOM" id="CLU_050669_0_0_3"/>
<dbReference type="OrthoDB" id="9812769at2"/>
<dbReference type="Proteomes" id="UP000001589">
    <property type="component" value="Chromosome"/>
</dbReference>
<dbReference type="GO" id="GO:0031676">
    <property type="term" value="C:plasma membrane-derived thylakoid membrane"/>
    <property type="evidence" value="ECO:0007669"/>
    <property type="project" value="UniProtKB-SubCell"/>
</dbReference>
<dbReference type="GO" id="GO:0045259">
    <property type="term" value="C:proton-transporting ATP synthase complex"/>
    <property type="evidence" value="ECO:0007669"/>
    <property type="project" value="UniProtKB-KW"/>
</dbReference>
<dbReference type="GO" id="GO:0005524">
    <property type="term" value="F:ATP binding"/>
    <property type="evidence" value="ECO:0007669"/>
    <property type="project" value="UniProtKB-UniRule"/>
</dbReference>
<dbReference type="GO" id="GO:0046933">
    <property type="term" value="F:proton-transporting ATP synthase activity, rotational mechanism"/>
    <property type="evidence" value="ECO:0007669"/>
    <property type="project" value="UniProtKB-UniRule"/>
</dbReference>
<dbReference type="CDD" id="cd12151">
    <property type="entry name" value="F1-ATPase_gamma"/>
    <property type="match status" value="1"/>
</dbReference>
<dbReference type="FunFam" id="3.40.1380.10:FF:000006">
    <property type="entry name" value="ATP synthase gamma chain"/>
    <property type="match status" value="1"/>
</dbReference>
<dbReference type="FunFam" id="1.10.287.80:FF:000003">
    <property type="entry name" value="ATP synthase gamma chain, chloroplastic"/>
    <property type="match status" value="1"/>
</dbReference>
<dbReference type="Gene3D" id="3.40.1380.10">
    <property type="match status" value="1"/>
</dbReference>
<dbReference type="Gene3D" id="1.10.287.80">
    <property type="entry name" value="ATP synthase, gamma subunit, helix hairpin domain"/>
    <property type="match status" value="2"/>
</dbReference>
<dbReference type="HAMAP" id="MF_00815">
    <property type="entry name" value="ATP_synth_gamma_bact"/>
    <property type="match status" value="1"/>
</dbReference>
<dbReference type="InterPro" id="IPR035968">
    <property type="entry name" value="ATP_synth_F1_ATPase_gsu"/>
</dbReference>
<dbReference type="InterPro" id="IPR000131">
    <property type="entry name" value="ATP_synth_F1_gsu"/>
</dbReference>
<dbReference type="NCBIfam" id="TIGR01146">
    <property type="entry name" value="ATPsyn_F1gamma"/>
    <property type="match status" value="1"/>
</dbReference>
<dbReference type="NCBIfam" id="NF004145">
    <property type="entry name" value="PRK05621.1-2"/>
    <property type="match status" value="1"/>
</dbReference>
<dbReference type="PANTHER" id="PTHR11693">
    <property type="entry name" value="ATP SYNTHASE GAMMA CHAIN"/>
    <property type="match status" value="1"/>
</dbReference>
<dbReference type="PANTHER" id="PTHR11693:SF41">
    <property type="entry name" value="ATP SYNTHASE GAMMA CHAIN, CHLOROPLASTIC"/>
    <property type="match status" value="1"/>
</dbReference>
<dbReference type="Pfam" id="PF00231">
    <property type="entry name" value="ATP-synt"/>
    <property type="match status" value="1"/>
</dbReference>
<dbReference type="PRINTS" id="PR00126">
    <property type="entry name" value="ATPASEGAMMA"/>
</dbReference>
<dbReference type="SUPFAM" id="SSF52943">
    <property type="entry name" value="ATP synthase (F1-ATPase), gamma subunit"/>
    <property type="match status" value="1"/>
</dbReference>
<reference key="1">
    <citation type="journal article" date="2007" name="PLoS Genet.">
        <title>Patterns and implications of gene gain and loss in the evolution of Prochlorococcus.</title>
        <authorList>
            <person name="Kettler G.C."/>
            <person name="Martiny A.C."/>
            <person name="Huang K."/>
            <person name="Zucker J."/>
            <person name="Coleman M.L."/>
            <person name="Rodrigue S."/>
            <person name="Chen F."/>
            <person name="Lapidus A."/>
            <person name="Ferriera S."/>
            <person name="Johnson J."/>
            <person name="Steglich C."/>
            <person name="Church G.M."/>
            <person name="Richardson P."/>
            <person name="Chisholm S.W."/>
        </authorList>
    </citation>
    <scope>NUCLEOTIDE SEQUENCE [LARGE SCALE GENOMIC DNA]</scope>
    <source>
        <strain>MIT 9515</strain>
    </source>
</reference>
<feature type="chain" id="PRO_1000053285" description="ATP synthase gamma chain">
    <location>
        <begin position="1"/>
        <end position="316"/>
    </location>
</feature>
<sequence length="316" mass="35346">MANLKEIRDRIVSVKNTRKITEAMRLVAAAKVRRAQDQVLKSRPFADKLARVLENIQSRVQFEAVDSPLLSKREVKSISLVCITADRGLCGGYNTNIIKKVEIRYAELIKQGYEPNLILVGKKAIGYFQNRKDKYVIKSTFKELEQVPTAIDSEGITNEVLAEFLSENSDRVEIIYTKFITLVSCAPVVQTLLPLDPQGIAQENDEIFRLTTKNSKLLVEKSNLEKNESDRLPSDIVFEQSPDQLLDSLLPLYLQNQILRALQESAASELACRMTAMNNASDNAKELASTLNLTYNKARQAAITQEILEVVGGSAV</sequence>
<organism>
    <name type="scientific">Prochlorococcus marinus (strain MIT 9515)</name>
    <dbReference type="NCBI Taxonomy" id="167542"/>
    <lineage>
        <taxon>Bacteria</taxon>
        <taxon>Bacillati</taxon>
        <taxon>Cyanobacteriota</taxon>
        <taxon>Cyanophyceae</taxon>
        <taxon>Synechococcales</taxon>
        <taxon>Prochlorococcaceae</taxon>
        <taxon>Prochlorococcus</taxon>
    </lineage>
</organism>
<proteinExistence type="inferred from homology"/>
<comment type="function">
    <text evidence="1">Produces ATP from ADP in the presence of a proton gradient across the membrane. The gamma chain is believed to be important in regulating ATPase activity and the flow of protons through the CF(0) complex.</text>
</comment>
<comment type="subunit">
    <text evidence="1">F-type ATPases have 2 components, CF(1) - the catalytic core - and CF(0) - the membrane proton channel. CF(1) has five subunits: alpha(3), beta(3), gamma(1), delta(1), epsilon(1). CF(0) has three main subunits: a, b and c.</text>
</comment>
<comment type="subcellular location">
    <subcellularLocation>
        <location evidence="1">Cellular thylakoid membrane</location>
        <topology evidence="1">Peripheral membrane protein</topology>
    </subcellularLocation>
</comment>
<comment type="similarity">
    <text evidence="1">Belongs to the ATPase gamma chain family.</text>
</comment>
<evidence type="ECO:0000255" key="1">
    <source>
        <dbReference type="HAMAP-Rule" id="MF_00815"/>
    </source>
</evidence>
<keyword id="KW-0066">ATP synthesis</keyword>
<keyword id="KW-0139">CF(1)</keyword>
<keyword id="KW-0375">Hydrogen ion transport</keyword>
<keyword id="KW-0406">Ion transport</keyword>
<keyword id="KW-0472">Membrane</keyword>
<keyword id="KW-0793">Thylakoid</keyword>
<keyword id="KW-0813">Transport</keyword>
<accession>A2BYH5</accession>
<gene>
    <name evidence="1" type="primary">atpG</name>
    <name evidence="1" type="synonym">atpC</name>
    <name type="ordered locus">P9515_16291</name>
</gene>
<name>ATPG_PROM5</name>
<protein>
    <recommendedName>
        <fullName evidence="1">ATP synthase gamma chain</fullName>
    </recommendedName>
    <alternativeName>
        <fullName evidence="1">ATP synthase F1 sector gamma subunit</fullName>
    </alternativeName>
    <alternativeName>
        <fullName evidence="1">F-ATPase gamma subunit</fullName>
    </alternativeName>
</protein>